<accession>P84370</accession>
<sequence length="14" mass="1548">GDSEVPGMWFGPRL</sequence>
<dbReference type="GO" id="GO:0005576">
    <property type="term" value="C:extracellular region"/>
    <property type="evidence" value="ECO:0007669"/>
    <property type="project" value="UniProtKB-SubCell"/>
</dbReference>
<dbReference type="GO" id="GO:0005184">
    <property type="term" value="F:neuropeptide hormone activity"/>
    <property type="evidence" value="ECO:0007669"/>
    <property type="project" value="InterPro"/>
</dbReference>
<dbReference type="GO" id="GO:0007218">
    <property type="term" value="P:neuropeptide signaling pathway"/>
    <property type="evidence" value="ECO:0007669"/>
    <property type="project" value="UniProtKB-KW"/>
</dbReference>
<dbReference type="InterPro" id="IPR001484">
    <property type="entry name" value="Pyrokinin_CS"/>
</dbReference>
<dbReference type="PROSITE" id="PS00539">
    <property type="entry name" value="PYROKININ"/>
    <property type="match status" value="1"/>
</dbReference>
<evidence type="ECO:0000250" key="1">
    <source>
        <dbReference type="UniProtKB" id="P82693"/>
    </source>
</evidence>
<evidence type="ECO:0000255" key="2"/>
<evidence type="ECO:0000269" key="3">
    <source>
    </source>
</evidence>
<evidence type="ECO:0000269" key="4">
    <source ref="2"/>
</evidence>
<evidence type="ECO:0000305" key="5"/>
<feature type="peptide" id="PRO_0000044357" description="Pyrokinin-6">
    <location>
        <begin position="1"/>
        <end position="14"/>
    </location>
</feature>
<feature type="modified residue" description="Leucine amide" evidence="3">
    <location>
        <position position="14"/>
    </location>
</feature>
<name>PPK6_EURFL</name>
<proteinExistence type="evidence at protein level"/>
<organism>
    <name type="scientific">Eurycotis floridana</name>
    <name type="common">Florida woods cockroach</name>
    <name type="synonym">Skunk roach</name>
    <dbReference type="NCBI Taxonomy" id="303877"/>
    <lineage>
        <taxon>Eukaryota</taxon>
        <taxon>Metazoa</taxon>
        <taxon>Ecdysozoa</taxon>
        <taxon>Arthropoda</taxon>
        <taxon>Hexapoda</taxon>
        <taxon>Insecta</taxon>
        <taxon>Pterygota</taxon>
        <taxon>Neoptera</taxon>
        <taxon>Polyneoptera</taxon>
        <taxon>Dictyoptera</taxon>
        <taxon>Blattodea</taxon>
        <taxon>Blattoidea</taxon>
        <taxon>Blattidae</taxon>
        <taxon>Eurycotiinae</taxon>
        <taxon>Eurycotis</taxon>
    </lineage>
</organism>
<reference evidence="5" key="1">
    <citation type="journal article" date="2005" name="Peptides">
        <title>Peptidomics of neurohemal organs from species of the cockroach family Blattidae: how do neuropeptides of closely related species differ?</title>
        <authorList>
            <person name="Predel R."/>
            <person name="Gaede G."/>
        </authorList>
    </citation>
    <scope>PROTEIN SEQUENCE</scope>
    <scope>MASS SPECTROMETRY</scope>
    <scope>AMIDATION AT LEU-14</scope>
    <source>
        <tissue evidence="3">Corpora allata</tissue>
    </source>
</reference>
<reference evidence="5" key="2">
    <citation type="submission" date="2004-11" db="UniProtKB">
        <authorList>
            <person name="Predel R."/>
            <person name="Gaede G."/>
        </authorList>
    </citation>
    <scope>SUBCELLULAR LOCATION</scope>
    <scope>TISSUE SPECIFICITY</scope>
</reference>
<comment type="function">
    <text evidence="1">Myoactive.</text>
</comment>
<comment type="subcellular location">
    <subcellularLocation>
        <location evidence="4">Secreted</location>
    </subcellularLocation>
</comment>
<comment type="tissue specificity">
    <text evidence="4">Expressed in the brain, subesophageal ganglion and in the retrocerebral complex (mainly corpora allata).</text>
</comment>
<comment type="mass spectrometry" mass="1546.7" method="MALDI" evidence="3"/>
<comment type="similarity">
    <text evidence="2">Belongs to the pyrokinin family.</text>
</comment>
<protein>
    <recommendedName>
        <fullName>Pyrokinin-6</fullName>
        <shortName>Eurfl-PK-6</shortName>
    </recommendedName>
    <alternativeName>
        <fullName>FXPRL-amide</fullName>
    </alternativeName>
</protein>
<keyword id="KW-0027">Amidation</keyword>
<keyword id="KW-0903">Direct protein sequencing</keyword>
<keyword id="KW-0527">Neuropeptide</keyword>
<keyword id="KW-0964">Secreted</keyword>